<accession>Q57G08</accession>
<name>RECF_BRUAB</name>
<evidence type="ECO:0000255" key="1">
    <source>
        <dbReference type="HAMAP-Rule" id="MF_00365"/>
    </source>
</evidence>
<organism>
    <name type="scientific">Brucella abortus biovar 1 (strain 9-941)</name>
    <dbReference type="NCBI Taxonomy" id="262698"/>
    <lineage>
        <taxon>Bacteria</taxon>
        <taxon>Pseudomonadati</taxon>
        <taxon>Pseudomonadota</taxon>
        <taxon>Alphaproteobacteria</taxon>
        <taxon>Hyphomicrobiales</taxon>
        <taxon>Brucellaceae</taxon>
        <taxon>Brucella/Ochrobactrum group</taxon>
        <taxon>Brucella</taxon>
    </lineage>
</organism>
<protein>
    <recommendedName>
        <fullName evidence="1">DNA replication and repair protein RecF</fullName>
    </recommendedName>
</protein>
<keyword id="KW-0067">ATP-binding</keyword>
<keyword id="KW-0963">Cytoplasm</keyword>
<keyword id="KW-0227">DNA damage</keyword>
<keyword id="KW-0234">DNA repair</keyword>
<keyword id="KW-0235">DNA replication</keyword>
<keyword id="KW-0238">DNA-binding</keyword>
<keyword id="KW-0547">Nucleotide-binding</keyword>
<keyword id="KW-0742">SOS response</keyword>
<reference key="1">
    <citation type="journal article" date="2005" name="J. Bacteriol.">
        <title>Completion of the genome sequence of Brucella abortus and comparison to the highly similar genomes of Brucella melitensis and Brucella suis.</title>
        <authorList>
            <person name="Halling S.M."/>
            <person name="Peterson-Burch B.D."/>
            <person name="Bricker B.J."/>
            <person name="Zuerner R.L."/>
            <person name="Qing Z."/>
            <person name="Li L.-L."/>
            <person name="Kapur V."/>
            <person name="Alt D.P."/>
            <person name="Olsen S.C."/>
        </authorList>
    </citation>
    <scope>NUCLEOTIDE SEQUENCE [LARGE SCALE GENOMIC DNA]</scope>
    <source>
        <strain>9-941</strain>
    </source>
</reference>
<gene>
    <name evidence="1" type="primary">recF</name>
    <name type="ordered locus">BruAb1_0003</name>
</gene>
<comment type="function">
    <text evidence="1">The RecF protein is involved in DNA metabolism; it is required for DNA replication and normal SOS inducibility. RecF binds preferentially to single-stranded, linear DNA. It also seems to bind ATP.</text>
</comment>
<comment type="subcellular location">
    <subcellularLocation>
        <location evidence="1">Cytoplasm</location>
    </subcellularLocation>
</comment>
<comment type="similarity">
    <text evidence="1">Belongs to the RecF family.</text>
</comment>
<feature type="chain" id="PRO_0000236112" description="DNA replication and repair protein RecF">
    <location>
        <begin position="1"/>
        <end position="384"/>
    </location>
</feature>
<feature type="binding site" evidence="1">
    <location>
        <begin position="43"/>
        <end position="50"/>
    </location>
    <ligand>
        <name>ATP</name>
        <dbReference type="ChEBI" id="CHEBI:30616"/>
    </ligand>
</feature>
<proteinExistence type="inferred from homology"/>
<dbReference type="EMBL" id="AE017223">
    <property type="protein sequence ID" value="AAX73426.1"/>
    <property type="molecule type" value="Genomic_DNA"/>
</dbReference>
<dbReference type="RefSeq" id="WP_002965250.1">
    <property type="nucleotide sequence ID" value="NC_006932.1"/>
</dbReference>
<dbReference type="SMR" id="Q57G08"/>
<dbReference type="EnsemblBacteria" id="AAX73426">
    <property type="protein sequence ID" value="AAX73426"/>
    <property type="gene ID" value="BruAb1_0003"/>
</dbReference>
<dbReference type="GeneID" id="93017511"/>
<dbReference type="KEGG" id="bmb:BruAb1_0003"/>
<dbReference type="HOGENOM" id="CLU_040267_2_0_5"/>
<dbReference type="Proteomes" id="UP000000540">
    <property type="component" value="Chromosome I"/>
</dbReference>
<dbReference type="GO" id="GO:0005737">
    <property type="term" value="C:cytoplasm"/>
    <property type="evidence" value="ECO:0007669"/>
    <property type="project" value="UniProtKB-SubCell"/>
</dbReference>
<dbReference type="GO" id="GO:0005524">
    <property type="term" value="F:ATP binding"/>
    <property type="evidence" value="ECO:0007669"/>
    <property type="project" value="UniProtKB-UniRule"/>
</dbReference>
<dbReference type="GO" id="GO:0016887">
    <property type="term" value="F:ATP hydrolysis activity"/>
    <property type="evidence" value="ECO:0007669"/>
    <property type="project" value="InterPro"/>
</dbReference>
<dbReference type="GO" id="GO:0003697">
    <property type="term" value="F:single-stranded DNA binding"/>
    <property type="evidence" value="ECO:0007669"/>
    <property type="project" value="UniProtKB-UniRule"/>
</dbReference>
<dbReference type="GO" id="GO:0006260">
    <property type="term" value="P:DNA replication"/>
    <property type="evidence" value="ECO:0007669"/>
    <property type="project" value="UniProtKB-UniRule"/>
</dbReference>
<dbReference type="GO" id="GO:0000731">
    <property type="term" value="P:DNA synthesis involved in DNA repair"/>
    <property type="evidence" value="ECO:0007669"/>
    <property type="project" value="TreeGrafter"/>
</dbReference>
<dbReference type="GO" id="GO:0006302">
    <property type="term" value="P:double-strand break repair"/>
    <property type="evidence" value="ECO:0007669"/>
    <property type="project" value="TreeGrafter"/>
</dbReference>
<dbReference type="GO" id="GO:0009432">
    <property type="term" value="P:SOS response"/>
    <property type="evidence" value="ECO:0007669"/>
    <property type="project" value="UniProtKB-UniRule"/>
</dbReference>
<dbReference type="CDD" id="cd03242">
    <property type="entry name" value="ABC_RecF"/>
    <property type="match status" value="1"/>
</dbReference>
<dbReference type="Gene3D" id="3.40.50.300">
    <property type="entry name" value="P-loop containing nucleotide triphosphate hydrolases"/>
    <property type="match status" value="1"/>
</dbReference>
<dbReference type="Gene3D" id="1.20.1050.90">
    <property type="entry name" value="RecF/RecN/SMC, N-terminal domain"/>
    <property type="match status" value="1"/>
</dbReference>
<dbReference type="HAMAP" id="MF_00365">
    <property type="entry name" value="RecF"/>
    <property type="match status" value="1"/>
</dbReference>
<dbReference type="InterPro" id="IPR003593">
    <property type="entry name" value="AAA+_ATPase"/>
</dbReference>
<dbReference type="InterPro" id="IPR001238">
    <property type="entry name" value="DNA-binding_RecF"/>
</dbReference>
<dbReference type="InterPro" id="IPR018078">
    <property type="entry name" value="DNA-binding_RecF_CS"/>
</dbReference>
<dbReference type="InterPro" id="IPR027417">
    <property type="entry name" value="P-loop_NTPase"/>
</dbReference>
<dbReference type="InterPro" id="IPR003395">
    <property type="entry name" value="RecF/RecN/SMC_N"/>
</dbReference>
<dbReference type="InterPro" id="IPR042174">
    <property type="entry name" value="RecF_2"/>
</dbReference>
<dbReference type="NCBIfam" id="TIGR00611">
    <property type="entry name" value="recf"/>
    <property type="match status" value="1"/>
</dbReference>
<dbReference type="PANTHER" id="PTHR32182">
    <property type="entry name" value="DNA REPLICATION AND REPAIR PROTEIN RECF"/>
    <property type="match status" value="1"/>
</dbReference>
<dbReference type="PANTHER" id="PTHR32182:SF0">
    <property type="entry name" value="DNA REPLICATION AND REPAIR PROTEIN RECF"/>
    <property type="match status" value="1"/>
</dbReference>
<dbReference type="Pfam" id="PF02463">
    <property type="entry name" value="SMC_N"/>
    <property type="match status" value="1"/>
</dbReference>
<dbReference type="SMART" id="SM00382">
    <property type="entry name" value="AAA"/>
    <property type="match status" value="1"/>
</dbReference>
<dbReference type="SUPFAM" id="SSF52540">
    <property type="entry name" value="P-loop containing nucleoside triphosphate hydrolases"/>
    <property type="match status" value="1"/>
</dbReference>
<dbReference type="PROSITE" id="PS00617">
    <property type="entry name" value="RECF_1"/>
    <property type="match status" value="1"/>
</dbReference>
<dbReference type="PROSITE" id="PS00618">
    <property type="entry name" value="RECF_2"/>
    <property type="match status" value="1"/>
</dbReference>
<sequence length="384" mass="41494">MEAKDHIERRPDRVSIRRLKLVNFRNYAELSLPLGPGHVVLTGENGSGKTNLIEAISFLSPGRGLRRAAYDDVARANAEGGFAIHAALDCMIYGDAEIGTGTAGGGEGGRKVRINRIAASADDLLDYARILWVVPSMDGLFTGGASDRRRFLDRMVLAIDTAHGKRVLDYEKAMRSRNRLLNDGSNDDQWLDAIENQMAELGTAIAAARAQAMRLIAAMIERLPAEGPFPKADCFLEGALESRIGVEAALDLEEDFRRTLRDGRARDRAAGRTLDGPHRTDLIVQHRPKSMPAALCSTGEQKALLIGLILAHARLTAELSGMAPILLLDEIAAHLDMGRRAALFGILDELGGQAFMTGTDRALFDALAGDAQFFNVSAGQLTGI</sequence>